<reference key="1">
    <citation type="journal article" date="2011" name="Appl. Environ. Microbiol.">
        <title>Genomic potential of Marinobacter aquaeolei, a biogeochemical 'opportunitroph'.</title>
        <authorList>
            <person name="Singer E."/>
            <person name="Webb E.A."/>
            <person name="Nelson W.C."/>
            <person name="Heidelberg J.F."/>
            <person name="Ivanova N."/>
            <person name="Pati A."/>
            <person name="Edwards K.J."/>
        </authorList>
    </citation>
    <scope>NUCLEOTIDE SEQUENCE [LARGE SCALE GENOMIC DNA]</scope>
    <source>
        <strain>ATCC 700491 / DSM 11845 / VT8</strain>
    </source>
</reference>
<name>SURE_MARN8</name>
<comment type="function">
    <text evidence="1">Nucleotidase that shows phosphatase activity on nucleoside 5'-monophosphates.</text>
</comment>
<comment type="catalytic activity">
    <reaction evidence="1">
        <text>a ribonucleoside 5'-phosphate + H2O = a ribonucleoside + phosphate</text>
        <dbReference type="Rhea" id="RHEA:12484"/>
        <dbReference type="ChEBI" id="CHEBI:15377"/>
        <dbReference type="ChEBI" id="CHEBI:18254"/>
        <dbReference type="ChEBI" id="CHEBI:43474"/>
        <dbReference type="ChEBI" id="CHEBI:58043"/>
        <dbReference type="EC" id="3.1.3.5"/>
    </reaction>
</comment>
<comment type="cofactor">
    <cofactor evidence="1">
        <name>a divalent metal cation</name>
        <dbReference type="ChEBI" id="CHEBI:60240"/>
    </cofactor>
    <text evidence="1">Binds 1 divalent metal cation per subunit.</text>
</comment>
<comment type="subcellular location">
    <subcellularLocation>
        <location evidence="1">Cytoplasm</location>
    </subcellularLocation>
</comment>
<comment type="similarity">
    <text evidence="1">Belongs to the SurE nucleotidase family.</text>
</comment>
<proteinExistence type="inferred from homology"/>
<protein>
    <recommendedName>
        <fullName evidence="1">5'-nucleotidase SurE</fullName>
        <ecNumber evidence="1">3.1.3.5</ecNumber>
    </recommendedName>
    <alternativeName>
        <fullName evidence="1">Nucleoside 5'-monophosphate phosphohydrolase</fullName>
    </alternativeName>
</protein>
<keyword id="KW-0963">Cytoplasm</keyword>
<keyword id="KW-0378">Hydrolase</keyword>
<keyword id="KW-0479">Metal-binding</keyword>
<keyword id="KW-0547">Nucleotide-binding</keyword>
<gene>
    <name evidence="1" type="primary">surE</name>
    <name type="ordered locus">Maqu_0926</name>
</gene>
<evidence type="ECO:0000255" key="1">
    <source>
        <dbReference type="HAMAP-Rule" id="MF_00060"/>
    </source>
</evidence>
<sequence length="256" mass="27520">MRILLSNDDGVHSPGLVALYEGLKGLGELKVVAPDRDHSGASNALTLNRPLTVEQHPNGFRSVDGTPTDCVHLAVNGLFDTAFDRVVSGINTHANLGDDIIYSGTVAAATEGRHLGLPAIAVSLVNNGHFHYDTAARVVRLLLEYKQALKLGPRSILNVNVPDLPWERLSGFRVTRLGHRERAEGAVPMTCPRGKQRYWIGAAGQGGDAGPGTDFHAVREGYVSITPVHIDMTRHEALSGLREWVDGMDESTGGQP</sequence>
<feature type="chain" id="PRO_1000007748" description="5'-nucleotidase SurE">
    <location>
        <begin position="1"/>
        <end position="256"/>
    </location>
</feature>
<feature type="binding site" evidence="1">
    <location>
        <position position="8"/>
    </location>
    <ligand>
        <name>a divalent metal cation</name>
        <dbReference type="ChEBI" id="CHEBI:60240"/>
    </ligand>
</feature>
<feature type="binding site" evidence="1">
    <location>
        <position position="9"/>
    </location>
    <ligand>
        <name>a divalent metal cation</name>
        <dbReference type="ChEBI" id="CHEBI:60240"/>
    </ligand>
</feature>
<feature type="binding site" evidence="1">
    <location>
        <position position="39"/>
    </location>
    <ligand>
        <name>a divalent metal cation</name>
        <dbReference type="ChEBI" id="CHEBI:60240"/>
    </ligand>
</feature>
<feature type="binding site" evidence="1">
    <location>
        <position position="91"/>
    </location>
    <ligand>
        <name>a divalent metal cation</name>
        <dbReference type="ChEBI" id="CHEBI:60240"/>
    </ligand>
</feature>
<accession>A1TZ53</accession>
<dbReference type="EC" id="3.1.3.5" evidence="1"/>
<dbReference type="EMBL" id="CP000514">
    <property type="protein sequence ID" value="ABM18022.1"/>
    <property type="molecule type" value="Genomic_DNA"/>
</dbReference>
<dbReference type="RefSeq" id="WP_011784442.1">
    <property type="nucleotide sequence ID" value="NC_008740.1"/>
</dbReference>
<dbReference type="SMR" id="A1TZ53"/>
<dbReference type="STRING" id="351348.Maqu_0926"/>
<dbReference type="KEGG" id="maq:Maqu_0926"/>
<dbReference type="eggNOG" id="COG0496">
    <property type="taxonomic scope" value="Bacteria"/>
</dbReference>
<dbReference type="HOGENOM" id="CLU_045192_1_2_6"/>
<dbReference type="OrthoDB" id="9780815at2"/>
<dbReference type="Proteomes" id="UP000000998">
    <property type="component" value="Chromosome"/>
</dbReference>
<dbReference type="GO" id="GO:0005737">
    <property type="term" value="C:cytoplasm"/>
    <property type="evidence" value="ECO:0007669"/>
    <property type="project" value="UniProtKB-SubCell"/>
</dbReference>
<dbReference type="GO" id="GO:0008254">
    <property type="term" value="F:3'-nucleotidase activity"/>
    <property type="evidence" value="ECO:0007669"/>
    <property type="project" value="TreeGrafter"/>
</dbReference>
<dbReference type="GO" id="GO:0008253">
    <property type="term" value="F:5'-nucleotidase activity"/>
    <property type="evidence" value="ECO:0007669"/>
    <property type="project" value="UniProtKB-UniRule"/>
</dbReference>
<dbReference type="GO" id="GO:0004309">
    <property type="term" value="F:exopolyphosphatase activity"/>
    <property type="evidence" value="ECO:0007669"/>
    <property type="project" value="TreeGrafter"/>
</dbReference>
<dbReference type="GO" id="GO:0046872">
    <property type="term" value="F:metal ion binding"/>
    <property type="evidence" value="ECO:0007669"/>
    <property type="project" value="UniProtKB-UniRule"/>
</dbReference>
<dbReference type="GO" id="GO:0000166">
    <property type="term" value="F:nucleotide binding"/>
    <property type="evidence" value="ECO:0007669"/>
    <property type="project" value="UniProtKB-KW"/>
</dbReference>
<dbReference type="FunFam" id="3.40.1210.10:FF:000001">
    <property type="entry name" value="5'/3'-nucleotidase SurE"/>
    <property type="match status" value="1"/>
</dbReference>
<dbReference type="Gene3D" id="3.40.1210.10">
    <property type="entry name" value="Survival protein SurE-like phosphatase/nucleotidase"/>
    <property type="match status" value="1"/>
</dbReference>
<dbReference type="HAMAP" id="MF_00060">
    <property type="entry name" value="SurE"/>
    <property type="match status" value="1"/>
</dbReference>
<dbReference type="InterPro" id="IPR030048">
    <property type="entry name" value="SurE"/>
</dbReference>
<dbReference type="InterPro" id="IPR002828">
    <property type="entry name" value="SurE-like_Pase/nucleotidase"/>
</dbReference>
<dbReference type="InterPro" id="IPR036523">
    <property type="entry name" value="SurE-like_sf"/>
</dbReference>
<dbReference type="NCBIfam" id="NF001489">
    <property type="entry name" value="PRK00346.1-3"/>
    <property type="match status" value="1"/>
</dbReference>
<dbReference type="NCBIfam" id="NF001490">
    <property type="entry name" value="PRK00346.1-4"/>
    <property type="match status" value="1"/>
</dbReference>
<dbReference type="NCBIfam" id="TIGR00087">
    <property type="entry name" value="surE"/>
    <property type="match status" value="1"/>
</dbReference>
<dbReference type="PANTHER" id="PTHR30457">
    <property type="entry name" value="5'-NUCLEOTIDASE SURE"/>
    <property type="match status" value="1"/>
</dbReference>
<dbReference type="PANTHER" id="PTHR30457:SF12">
    <property type="entry name" value="5'_3'-NUCLEOTIDASE SURE"/>
    <property type="match status" value="1"/>
</dbReference>
<dbReference type="Pfam" id="PF01975">
    <property type="entry name" value="SurE"/>
    <property type="match status" value="1"/>
</dbReference>
<dbReference type="SUPFAM" id="SSF64167">
    <property type="entry name" value="SurE-like"/>
    <property type="match status" value="1"/>
</dbReference>
<organism>
    <name type="scientific">Marinobacter nauticus (strain ATCC 700491 / DSM 11845 / VT8)</name>
    <name type="common">Marinobacter aquaeolei</name>
    <dbReference type="NCBI Taxonomy" id="351348"/>
    <lineage>
        <taxon>Bacteria</taxon>
        <taxon>Pseudomonadati</taxon>
        <taxon>Pseudomonadota</taxon>
        <taxon>Gammaproteobacteria</taxon>
        <taxon>Pseudomonadales</taxon>
        <taxon>Marinobacteraceae</taxon>
        <taxon>Marinobacter</taxon>
    </lineage>
</organism>